<protein>
    <recommendedName>
        <fullName evidence="1">Cell division topological specificity factor</fullName>
    </recommendedName>
</protein>
<proteinExistence type="inferred from homology"/>
<gene>
    <name evidence="1" type="primary">minE</name>
    <name type="ordered locus">PSPA7_1880</name>
</gene>
<feature type="chain" id="PRO_1000047790" description="Cell division topological specificity factor">
    <location>
        <begin position="1"/>
        <end position="84"/>
    </location>
</feature>
<keyword id="KW-0131">Cell cycle</keyword>
<keyword id="KW-0132">Cell division</keyword>
<accession>A6V2H6</accession>
<evidence type="ECO:0000255" key="1">
    <source>
        <dbReference type="HAMAP-Rule" id="MF_00262"/>
    </source>
</evidence>
<reference key="1">
    <citation type="submission" date="2007-06" db="EMBL/GenBank/DDBJ databases">
        <authorList>
            <person name="Dodson R.J."/>
            <person name="Harkins D."/>
            <person name="Paulsen I.T."/>
        </authorList>
    </citation>
    <scope>NUCLEOTIDE SEQUENCE [LARGE SCALE GENOMIC DNA]</scope>
    <source>
        <strain>DSM 24068 / PA7</strain>
    </source>
</reference>
<comment type="function">
    <text evidence="1">Prevents the cell division inhibition by proteins MinC and MinD at internal division sites while permitting inhibition at polar sites. This ensures cell division at the proper site by restricting the formation of a division septum at the midpoint of the long axis of the cell.</text>
</comment>
<comment type="similarity">
    <text evidence="1">Belongs to the MinE family.</text>
</comment>
<sequence length="84" mass="9790">MSLLDFFRSRKSQNSASIAKERLQIIVAHERGQRAQPDYLPQLQKDLLEVIRKYVPIDQEQIQVELENQGNCSILELNITLPDR</sequence>
<organism>
    <name type="scientific">Pseudomonas paraeruginosa (strain DSM 24068 / PA7)</name>
    <name type="common">Pseudomonas aeruginosa (strain PA7)</name>
    <dbReference type="NCBI Taxonomy" id="381754"/>
    <lineage>
        <taxon>Bacteria</taxon>
        <taxon>Pseudomonadati</taxon>
        <taxon>Pseudomonadota</taxon>
        <taxon>Gammaproteobacteria</taxon>
        <taxon>Pseudomonadales</taxon>
        <taxon>Pseudomonadaceae</taxon>
        <taxon>Pseudomonas</taxon>
        <taxon>Pseudomonas paraeruginosa</taxon>
    </lineage>
</organism>
<name>MINE_PSEP7</name>
<dbReference type="EMBL" id="CP000744">
    <property type="protein sequence ID" value="ABR86722.1"/>
    <property type="molecule type" value="Genomic_DNA"/>
</dbReference>
<dbReference type="RefSeq" id="WP_003091581.1">
    <property type="nucleotide sequence ID" value="NC_009656.1"/>
</dbReference>
<dbReference type="SMR" id="A6V2H6"/>
<dbReference type="GeneID" id="77220234"/>
<dbReference type="KEGG" id="pap:PSPA7_1880"/>
<dbReference type="HOGENOM" id="CLU_137929_2_1_6"/>
<dbReference type="Proteomes" id="UP000001582">
    <property type="component" value="Chromosome"/>
</dbReference>
<dbReference type="GO" id="GO:0051301">
    <property type="term" value="P:cell division"/>
    <property type="evidence" value="ECO:0007669"/>
    <property type="project" value="UniProtKB-KW"/>
</dbReference>
<dbReference type="GO" id="GO:0032955">
    <property type="term" value="P:regulation of division septum assembly"/>
    <property type="evidence" value="ECO:0007669"/>
    <property type="project" value="InterPro"/>
</dbReference>
<dbReference type="FunFam" id="3.30.1070.10:FF:000001">
    <property type="entry name" value="Cell division topological specificity factor"/>
    <property type="match status" value="1"/>
</dbReference>
<dbReference type="Gene3D" id="3.30.1070.10">
    <property type="entry name" value="Cell division topological specificity factor MinE"/>
    <property type="match status" value="1"/>
</dbReference>
<dbReference type="HAMAP" id="MF_00262">
    <property type="entry name" value="MinE"/>
    <property type="match status" value="1"/>
</dbReference>
<dbReference type="InterPro" id="IPR005527">
    <property type="entry name" value="MinE"/>
</dbReference>
<dbReference type="InterPro" id="IPR036707">
    <property type="entry name" value="MinE_sf"/>
</dbReference>
<dbReference type="NCBIfam" id="TIGR01215">
    <property type="entry name" value="minE"/>
    <property type="match status" value="1"/>
</dbReference>
<dbReference type="NCBIfam" id="NF001422">
    <property type="entry name" value="PRK00296.1"/>
    <property type="match status" value="1"/>
</dbReference>
<dbReference type="NCBIfam" id="NF010595">
    <property type="entry name" value="PRK13989.1"/>
    <property type="match status" value="1"/>
</dbReference>
<dbReference type="Pfam" id="PF03776">
    <property type="entry name" value="MinE"/>
    <property type="match status" value="1"/>
</dbReference>
<dbReference type="SUPFAM" id="SSF55229">
    <property type="entry name" value="Cell division protein MinE topological specificity domain"/>
    <property type="match status" value="1"/>
</dbReference>